<comment type="function">
    <text evidence="1">Binds as a heterodimer with protein bS6 to the central domain of the 16S rRNA, where it helps stabilize the platform of the 30S subunit.</text>
</comment>
<comment type="subunit">
    <text evidence="1">Part of the 30S ribosomal subunit. Forms a tight heterodimer with protein bS6.</text>
</comment>
<comment type="similarity">
    <text evidence="1">Belongs to the bacterial ribosomal protein bS18 family.</text>
</comment>
<name>RS18_SOLUE</name>
<evidence type="ECO:0000255" key="1">
    <source>
        <dbReference type="HAMAP-Rule" id="MF_00270"/>
    </source>
</evidence>
<evidence type="ECO:0000256" key="2">
    <source>
        <dbReference type="SAM" id="MobiDB-lite"/>
    </source>
</evidence>
<evidence type="ECO:0000305" key="3"/>
<reference key="1">
    <citation type="journal article" date="2009" name="Appl. Environ. Microbiol.">
        <title>Three genomes from the phylum Acidobacteria provide insight into the lifestyles of these microorganisms in soils.</title>
        <authorList>
            <person name="Ward N.L."/>
            <person name="Challacombe J.F."/>
            <person name="Janssen P.H."/>
            <person name="Henrissat B."/>
            <person name="Coutinho P.M."/>
            <person name="Wu M."/>
            <person name="Xie G."/>
            <person name="Haft D.H."/>
            <person name="Sait M."/>
            <person name="Badger J."/>
            <person name="Barabote R.D."/>
            <person name="Bradley B."/>
            <person name="Brettin T.S."/>
            <person name="Brinkac L.M."/>
            <person name="Bruce D."/>
            <person name="Creasy T."/>
            <person name="Daugherty S.C."/>
            <person name="Davidsen T.M."/>
            <person name="DeBoy R.T."/>
            <person name="Detter J.C."/>
            <person name="Dodson R.J."/>
            <person name="Durkin A.S."/>
            <person name="Ganapathy A."/>
            <person name="Gwinn-Giglio M."/>
            <person name="Han C.S."/>
            <person name="Khouri H."/>
            <person name="Kiss H."/>
            <person name="Kothari S.P."/>
            <person name="Madupu R."/>
            <person name="Nelson K.E."/>
            <person name="Nelson W.C."/>
            <person name="Paulsen I."/>
            <person name="Penn K."/>
            <person name="Ren Q."/>
            <person name="Rosovitz M.J."/>
            <person name="Selengut J.D."/>
            <person name="Shrivastava S."/>
            <person name="Sullivan S.A."/>
            <person name="Tapia R."/>
            <person name="Thompson L.S."/>
            <person name="Watkins K.L."/>
            <person name="Yang Q."/>
            <person name="Yu C."/>
            <person name="Zafar N."/>
            <person name="Zhou L."/>
            <person name="Kuske C.R."/>
        </authorList>
    </citation>
    <scope>NUCLEOTIDE SEQUENCE [LARGE SCALE GENOMIC DNA]</scope>
    <source>
        <strain>Ellin6076</strain>
    </source>
</reference>
<proteinExistence type="inferred from homology"/>
<sequence>MAESKGRPGSASQRPTGGDKAIAGQKKQYFRRKKVCRFCVEKIDDINYKDVKMLHAFVAERGKIVPRRISGVCAPHQRRLTDAIKKARNIALLPFAASF</sequence>
<feature type="chain" id="PRO_0000345546" description="Small ribosomal subunit protein bS18">
    <location>
        <begin position="1"/>
        <end position="99"/>
    </location>
</feature>
<feature type="region of interest" description="Disordered" evidence="2">
    <location>
        <begin position="1"/>
        <end position="25"/>
    </location>
</feature>
<protein>
    <recommendedName>
        <fullName evidence="1">Small ribosomal subunit protein bS18</fullName>
    </recommendedName>
    <alternativeName>
        <fullName evidence="3">30S ribosomal protein S18</fullName>
    </alternativeName>
</protein>
<dbReference type="EMBL" id="CP000473">
    <property type="protein sequence ID" value="ABJ88005.1"/>
    <property type="molecule type" value="Genomic_DNA"/>
</dbReference>
<dbReference type="SMR" id="Q01QR5"/>
<dbReference type="FunCoup" id="Q01QR5">
    <property type="interactions" value="669"/>
</dbReference>
<dbReference type="STRING" id="234267.Acid_7092"/>
<dbReference type="KEGG" id="sus:Acid_7092"/>
<dbReference type="eggNOG" id="COG0238">
    <property type="taxonomic scope" value="Bacteria"/>
</dbReference>
<dbReference type="HOGENOM" id="CLU_148710_0_0_0"/>
<dbReference type="InParanoid" id="Q01QR5"/>
<dbReference type="OrthoDB" id="9812008at2"/>
<dbReference type="GO" id="GO:0022627">
    <property type="term" value="C:cytosolic small ribosomal subunit"/>
    <property type="evidence" value="ECO:0007669"/>
    <property type="project" value="TreeGrafter"/>
</dbReference>
<dbReference type="GO" id="GO:0070181">
    <property type="term" value="F:small ribosomal subunit rRNA binding"/>
    <property type="evidence" value="ECO:0007669"/>
    <property type="project" value="TreeGrafter"/>
</dbReference>
<dbReference type="GO" id="GO:0003735">
    <property type="term" value="F:structural constituent of ribosome"/>
    <property type="evidence" value="ECO:0007669"/>
    <property type="project" value="InterPro"/>
</dbReference>
<dbReference type="GO" id="GO:0006412">
    <property type="term" value="P:translation"/>
    <property type="evidence" value="ECO:0007669"/>
    <property type="project" value="UniProtKB-UniRule"/>
</dbReference>
<dbReference type="Gene3D" id="4.10.640.10">
    <property type="entry name" value="Ribosomal protein S18"/>
    <property type="match status" value="1"/>
</dbReference>
<dbReference type="HAMAP" id="MF_00270">
    <property type="entry name" value="Ribosomal_bS18"/>
    <property type="match status" value="1"/>
</dbReference>
<dbReference type="InterPro" id="IPR001648">
    <property type="entry name" value="Ribosomal_bS18"/>
</dbReference>
<dbReference type="InterPro" id="IPR036870">
    <property type="entry name" value="Ribosomal_bS18_sf"/>
</dbReference>
<dbReference type="NCBIfam" id="TIGR00165">
    <property type="entry name" value="S18"/>
    <property type="match status" value="1"/>
</dbReference>
<dbReference type="PANTHER" id="PTHR13479">
    <property type="entry name" value="30S RIBOSOMAL PROTEIN S18"/>
    <property type="match status" value="1"/>
</dbReference>
<dbReference type="PANTHER" id="PTHR13479:SF40">
    <property type="entry name" value="SMALL RIBOSOMAL SUBUNIT PROTEIN BS18M"/>
    <property type="match status" value="1"/>
</dbReference>
<dbReference type="Pfam" id="PF01084">
    <property type="entry name" value="Ribosomal_S18"/>
    <property type="match status" value="1"/>
</dbReference>
<dbReference type="PRINTS" id="PR00974">
    <property type="entry name" value="RIBOSOMALS18"/>
</dbReference>
<dbReference type="SUPFAM" id="SSF46911">
    <property type="entry name" value="Ribosomal protein S18"/>
    <property type="match status" value="1"/>
</dbReference>
<gene>
    <name evidence="1" type="primary">rpsR</name>
    <name type="ordered locus">Acid_7092</name>
</gene>
<accession>Q01QR5</accession>
<keyword id="KW-0687">Ribonucleoprotein</keyword>
<keyword id="KW-0689">Ribosomal protein</keyword>
<keyword id="KW-0694">RNA-binding</keyword>
<keyword id="KW-0699">rRNA-binding</keyword>
<organism>
    <name type="scientific">Solibacter usitatus (strain Ellin6076)</name>
    <dbReference type="NCBI Taxonomy" id="234267"/>
    <lineage>
        <taxon>Bacteria</taxon>
        <taxon>Pseudomonadati</taxon>
        <taxon>Acidobacteriota</taxon>
        <taxon>Terriglobia</taxon>
        <taxon>Bryobacterales</taxon>
        <taxon>Solibacteraceae</taxon>
        <taxon>Candidatus Solibacter</taxon>
    </lineage>
</organism>